<protein>
    <recommendedName>
        <fullName>Probable serine/threonine-protein kinase DDB_G0283065</fullName>
        <ecNumber>2.7.11.1</ecNumber>
    </recommendedName>
</protein>
<evidence type="ECO:0000255" key="1">
    <source>
        <dbReference type="PROSITE-ProRule" id="PRU00159"/>
    </source>
</evidence>
<evidence type="ECO:0000255" key="2">
    <source>
        <dbReference type="PROSITE-ProRule" id="PRU10028"/>
    </source>
</evidence>
<evidence type="ECO:0000256" key="3">
    <source>
        <dbReference type="SAM" id="MobiDB-lite"/>
    </source>
</evidence>
<feature type="chain" id="PRO_0000362040" description="Probable serine/threonine-protein kinase DDB_G0283065">
    <location>
        <begin position="1"/>
        <end position="637"/>
    </location>
</feature>
<feature type="domain" description="Protein kinase" evidence="1">
    <location>
        <begin position="236"/>
        <end position="629"/>
    </location>
</feature>
<feature type="region of interest" description="Disordered" evidence="3">
    <location>
        <begin position="36"/>
        <end position="88"/>
    </location>
</feature>
<feature type="region of interest" description="Disordered" evidence="3">
    <location>
        <begin position="155"/>
        <end position="234"/>
    </location>
</feature>
<feature type="compositionally biased region" description="Low complexity" evidence="3">
    <location>
        <begin position="53"/>
        <end position="85"/>
    </location>
</feature>
<feature type="active site" description="Proton acceptor" evidence="1 2">
    <location>
        <position position="479"/>
    </location>
</feature>
<feature type="binding site" evidence="1">
    <location>
        <begin position="242"/>
        <end position="250"/>
    </location>
    <ligand>
        <name>ATP</name>
        <dbReference type="ChEBI" id="CHEBI:30616"/>
    </ligand>
</feature>
<feature type="binding site" evidence="1">
    <location>
        <position position="265"/>
    </location>
    <ligand>
        <name>ATP</name>
        <dbReference type="ChEBI" id="CHEBI:30616"/>
    </ligand>
</feature>
<gene>
    <name type="ORF">DDB_G0283065</name>
</gene>
<sequence length="637" mass="70252">MWKFTSSATKRIGNSLSSNNNNGSLLFSLNFNGSNNNNNNESSKPITAANTQNNSTTKSIDNNNNNTNNSNSNNNNNDNIKNNNKFNRASHRSNITLVAINNKDISQMTNLLADSGISVSKISNKKISLASKINTLNKLNSSLLHLNSINNSLTNSNNNNDNNNLIDNNNNDNYNNDSISSSSSSSSLSESSQTLSSASSSASSSSSSTLSSSSSVSSKSLNNNNNNNNSRFNNEFNDVRVLGKGGFGIVFQCCNIFDQMEYAVKRIKVNQKIPTKELMEVRAMARLNHPNIVRYYGSWIEEEIITNNSIDHYGENDNNLFENIDSFPSSSYSSVSAAASSSSLVSNSSNSYSNNKATYISNSSSSSSSSSSCSYSIGNGNLSISECTNDDNNNYNQLKQKKFSLYIQMELCKYSTLRNLINEINNIKSITSIQSTSSIANPIGTNILISLDIKQCREITRQILVALKYIHSQGFVHRDITPDNVFVCQSPFGIKIGDFGLATTIESLTVDSNNNNNNNINNNNNNNKKVGGLGTYLYSSNEQEQGDNYNQKTDLYSVGVIFFEMLSQFKTTMERSTTLSKLKKSLSVLKTNPNLKQKYPNDTDFIDHLIQSFATRPFSNQISTDYDNFPPKNFLIN</sequence>
<proteinExistence type="inferred from homology"/>
<accession>Q54RP7</accession>
<name>Y0652_DICDI</name>
<dbReference type="EC" id="2.7.11.1"/>
<dbReference type="EMBL" id="AAFI02000049">
    <property type="protein sequence ID" value="EAL65976.1"/>
    <property type="molecule type" value="Genomic_DNA"/>
</dbReference>
<dbReference type="RefSeq" id="XP_639304.1">
    <property type="nucleotide sequence ID" value="XM_634212.1"/>
</dbReference>
<dbReference type="SMR" id="Q54RP7"/>
<dbReference type="STRING" id="44689.Q54RP7"/>
<dbReference type="PaxDb" id="44689-DDB0220652"/>
<dbReference type="EnsemblProtists" id="EAL65976">
    <property type="protein sequence ID" value="EAL65976"/>
    <property type="gene ID" value="DDB_G0283065"/>
</dbReference>
<dbReference type="GeneID" id="8623875"/>
<dbReference type="KEGG" id="ddi:DDB_G0283065"/>
<dbReference type="dictyBase" id="DDB_G0283065"/>
<dbReference type="VEuPathDB" id="AmoebaDB:DDB_G0283065"/>
<dbReference type="eggNOG" id="KOG1035">
    <property type="taxonomic scope" value="Eukaryota"/>
</dbReference>
<dbReference type="HOGENOM" id="CLU_429895_0_0_1"/>
<dbReference type="InParanoid" id="Q54RP7"/>
<dbReference type="OMA" id="EMELCDF"/>
<dbReference type="PhylomeDB" id="Q54RP7"/>
<dbReference type="PRO" id="PR:Q54RP7"/>
<dbReference type="Proteomes" id="UP000002195">
    <property type="component" value="Chromosome 4"/>
</dbReference>
<dbReference type="GO" id="GO:0005737">
    <property type="term" value="C:cytoplasm"/>
    <property type="evidence" value="ECO:0000318"/>
    <property type="project" value="GO_Central"/>
</dbReference>
<dbReference type="GO" id="GO:0005829">
    <property type="term" value="C:cytosol"/>
    <property type="evidence" value="ECO:0000318"/>
    <property type="project" value="GO_Central"/>
</dbReference>
<dbReference type="GO" id="GO:0005634">
    <property type="term" value="C:nucleus"/>
    <property type="evidence" value="ECO:0000318"/>
    <property type="project" value="GO_Central"/>
</dbReference>
<dbReference type="GO" id="GO:0005524">
    <property type="term" value="F:ATP binding"/>
    <property type="evidence" value="ECO:0007669"/>
    <property type="project" value="UniProtKB-KW"/>
</dbReference>
<dbReference type="GO" id="GO:0004694">
    <property type="term" value="F:eukaryotic translation initiation factor 2alpha kinase activity"/>
    <property type="evidence" value="ECO:0000318"/>
    <property type="project" value="GO_Central"/>
</dbReference>
<dbReference type="GO" id="GO:0106310">
    <property type="term" value="F:protein serine kinase activity"/>
    <property type="evidence" value="ECO:0007669"/>
    <property type="project" value="RHEA"/>
</dbReference>
<dbReference type="GO" id="GO:0034198">
    <property type="term" value="P:cellular response to amino acid starvation"/>
    <property type="evidence" value="ECO:0000318"/>
    <property type="project" value="GO_Central"/>
</dbReference>
<dbReference type="GO" id="GO:0032057">
    <property type="term" value="P:negative regulation of translational initiation in response to stress"/>
    <property type="evidence" value="ECO:0000318"/>
    <property type="project" value="GO_Central"/>
</dbReference>
<dbReference type="CDD" id="cd13996">
    <property type="entry name" value="STKc_EIF2AK"/>
    <property type="match status" value="1"/>
</dbReference>
<dbReference type="Gene3D" id="3.30.200.20">
    <property type="entry name" value="Phosphorylase Kinase, domain 1"/>
    <property type="match status" value="1"/>
</dbReference>
<dbReference type="Gene3D" id="1.10.510.10">
    <property type="entry name" value="Transferase(Phosphotransferase) domain 1"/>
    <property type="match status" value="1"/>
</dbReference>
<dbReference type="InterPro" id="IPR050339">
    <property type="entry name" value="CC_SR_Kinase"/>
</dbReference>
<dbReference type="InterPro" id="IPR011009">
    <property type="entry name" value="Kinase-like_dom_sf"/>
</dbReference>
<dbReference type="InterPro" id="IPR000719">
    <property type="entry name" value="Prot_kinase_dom"/>
</dbReference>
<dbReference type="InterPro" id="IPR017441">
    <property type="entry name" value="Protein_kinase_ATP_BS"/>
</dbReference>
<dbReference type="InterPro" id="IPR008266">
    <property type="entry name" value="Tyr_kinase_AS"/>
</dbReference>
<dbReference type="PANTHER" id="PTHR11042">
    <property type="entry name" value="EUKARYOTIC TRANSLATION INITIATION FACTOR 2-ALPHA KINASE EIF2-ALPHA KINASE -RELATED"/>
    <property type="match status" value="1"/>
</dbReference>
<dbReference type="PANTHER" id="PTHR11042:SF191">
    <property type="entry name" value="SERINE_THREONINE-PROTEIN KINASE DDB_G0283065-RELATED"/>
    <property type="match status" value="1"/>
</dbReference>
<dbReference type="Pfam" id="PF00069">
    <property type="entry name" value="Pkinase"/>
    <property type="match status" value="2"/>
</dbReference>
<dbReference type="SUPFAM" id="SSF56112">
    <property type="entry name" value="Protein kinase-like (PK-like)"/>
    <property type="match status" value="1"/>
</dbReference>
<dbReference type="PROSITE" id="PS00107">
    <property type="entry name" value="PROTEIN_KINASE_ATP"/>
    <property type="match status" value="1"/>
</dbReference>
<dbReference type="PROSITE" id="PS50011">
    <property type="entry name" value="PROTEIN_KINASE_DOM"/>
    <property type="match status" value="1"/>
</dbReference>
<dbReference type="PROSITE" id="PS00109">
    <property type="entry name" value="PROTEIN_KINASE_TYR"/>
    <property type="match status" value="1"/>
</dbReference>
<keyword id="KW-0067">ATP-binding</keyword>
<keyword id="KW-0418">Kinase</keyword>
<keyword id="KW-0547">Nucleotide-binding</keyword>
<keyword id="KW-1185">Reference proteome</keyword>
<keyword id="KW-0723">Serine/threonine-protein kinase</keyword>
<keyword id="KW-0808">Transferase</keyword>
<reference key="1">
    <citation type="journal article" date="2005" name="Nature">
        <title>The genome of the social amoeba Dictyostelium discoideum.</title>
        <authorList>
            <person name="Eichinger L."/>
            <person name="Pachebat J.A."/>
            <person name="Gloeckner G."/>
            <person name="Rajandream M.A."/>
            <person name="Sucgang R."/>
            <person name="Berriman M."/>
            <person name="Song J."/>
            <person name="Olsen R."/>
            <person name="Szafranski K."/>
            <person name="Xu Q."/>
            <person name="Tunggal B."/>
            <person name="Kummerfeld S."/>
            <person name="Madera M."/>
            <person name="Konfortov B.A."/>
            <person name="Rivero F."/>
            <person name="Bankier A.T."/>
            <person name="Lehmann R."/>
            <person name="Hamlin N."/>
            <person name="Davies R."/>
            <person name="Gaudet P."/>
            <person name="Fey P."/>
            <person name="Pilcher K."/>
            <person name="Chen G."/>
            <person name="Saunders D."/>
            <person name="Sodergren E.J."/>
            <person name="Davis P."/>
            <person name="Kerhornou A."/>
            <person name="Nie X."/>
            <person name="Hall N."/>
            <person name="Anjard C."/>
            <person name="Hemphill L."/>
            <person name="Bason N."/>
            <person name="Farbrother P."/>
            <person name="Desany B."/>
            <person name="Just E."/>
            <person name="Morio T."/>
            <person name="Rost R."/>
            <person name="Churcher C.M."/>
            <person name="Cooper J."/>
            <person name="Haydock S."/>
            <person name="van Driessche N."/>
            <person name="Cronin A."/>
            <person name="Goodhead I."/>
            <person name="Muzny D.M."/>
            <person name="Mourier T."/>
            <person name="Pain A."/>
            <person name="Lu M."/>
            <person name="Harper D."/>
            <person name="Lindsay R."/>
            <person name="Hauser H."/>
            <person name="James K.D."/>
            <person name="Quiles M."/>
            <person name="Madan Babu M."/>
            <person name="Saito T."/>
            <person name="Buchrieser C."/>
            <person name="Wardroper A."/>
            <person name="Felder M."/>
            <person name="Thangavelu M."/>
            <person name="Johnson D."/>
            <person name="Knights A."/>
            <person name="Loulseged H."/>
            <person name="Mungall K.L."/>
            <person name="Oliver K."/>
            <person name="Price C."/>
            <person name="Quail M.A."/>
            <person name="Urushihara H."/>
            <person name="Hernandez J."/>
            <person name="Rabbinowitsch E."/>
            <person name="Steffen D."/>
            <person name="Sanders M."/>
            <person name="Ma J."/>
            <person name="Kohara Y."/>
            <person name="Sharp S."/>
            <person name="Simmonds M.N."/>
            <person name="Spiegler S."/>
            <person name="Tivey A."/>
            <person name="Sugano S."/>
            <person name="White B."/>
            <person name="Walker D."/>
            <person name="Woodward J.R."/>
            <person name="Winckler T."/>
            <person name="Tanaka Y."/>
            <person name="Shaulsky G."/>
            <person name="Schleicher M."/>
            <person name="Weinstock G.M."/>
            <person name="Rosenthal A."/>
            <person name="Cox E.C."/>
            <person name="Chisholm R.L."/>
            <person name="Gibbs R.A."/>
            <person name="Loomis W.F."/>
            <person name="Platzer M."/>
            <person name="Kay R.R."/>
            <person name="Williams J.G."/>
            <person name="Dear P.H."/>
            <person name="Noegel A.A."/>
            <person name="Barrell B.G."/>
            <person name="Kuspa A."/>
        </authorList>
    </citation>
    <scope>NUCLEOTIDE SEQUENCE [LARGE SCALE GENOMIC DNA]</scope>
    <source>
        <strain>AX4</strain>
    </source>
</reference>
<comment type="catalytic activity">
    <reaction>
        <text>L-seryl-[protein] + ATP = O-phospho-L-seryl-[protein] + ADP + H(+)</text>
        <dbReference type="Rhea" id="RHEA:17989"/>
        <dbReference type="Rhea" id="RHEA-COMP:9863"/>
        <dbReference type="Rhea" id="RHEA-COMP:11604"/>
        <dbReference type="ChEBI" id="CHEBI:15378"/>
        <dbReference type="ChEBI" id="CHEBI:29999"/>
        <dbReference type="ChEBI" id="CHEBI:30616"/>
        <dbReference type="ChEBI" id="CHEBI:83421"/>
        <dbReference type="ChEBI" id="CHEBI:456216"/>
        <dbReference type="EC" id="2.7.11.1"/>
    </reaction>
</comment>
<comment type="catalytic activity">
    <reaction>
        <text>L-threonyl-[protein] + ATP = O-phospho-L-threonyl-[protein] + ADP + H(+)</text>
        <dbReference type="Rhea" id="RHEA:46608"/>
        <dbReference type="Rhea" id="RHEA-COMP:11060"/>
        <dbReference type="Rhea" id="RHEA-COMP:11605"/>
        <dbReference type="ChEBI" id="CHEBI:15378"/>
        <dbReference type="ChEBI" id="CHEBI:30013"/>
        <dbReference type="ChEBI" id="CHEBI:30616"/>
        <dbReference type="ChEBI" id="CHEBI:61977"/>
        <dbReference type="ChEBI" id="CHEBI:456216"/>
        <dbReference type="EC" id="2.7.11.1"/>
    </reaction>
</comment>
<comment type="similarity">
    <text evidence="1">Belongs to the protein kinase superfamily. Ser/Thr protein kinase family. GCN2 subfamily.</text>
</comment>
<organism>
    <name type="scientific">Dictyostelium discoideum</name>
    <name type="common">Social amoeba</name>
    <dbReference type="NCBI Taxonomy" id="44689"/>
    <lineage>
        <taxon>Eukaryota</taxon>
        <taxon>Amoebozoa</taxon>
        <taxon>Evosea</taxon>
        <taxon>Eumycetozoa</taxon>
        <taxon>Dictyostelia</taxon>
        <taxon>Dictyosteliales</taxon>
        <taxon>Dictyosteliaceae</taxon>
        <taxon>Dictyostelium</taxon>
    </lineage>
</organism>